<reference key="1">
    <citation type="submission" date="2007-09" db="EMBL/GenBank/DDBJ databases">
        <authorList>
            <consortium name="NIH - Xenopus Gene Collection (XGC) project"/>
        </authorList>
    </citation>
    <scope>NUCLEOTIDE SEQUENCE [LARGE SCALE MRNA]</scope>
    <source>
        <tissue>Testis</tissue>
    </source>
</reference>
<evidence type="ECO:0000250" key="1">
    <source>
        <dbReference type="UniProtKB" id="Q9H7X0"/>
    </source>
</evidence>
<evidence type="ECO:0000255" key="2">
    <source>
        <dbReference type="PROSITE-ProRule" id="PRU00532"/>
    </source>
</evidence>
<evidence type="ECO:0000305" key="3"/>
<dbReference type="EC" id="2.3.1.259" evidence="1"/>
<dbReference type="EC" id="2.3.1.48" evidence="1"/>
<dbReference type="EMBL" id="BC153734">
    <property type="protein sequence ID" value="AAI53735.1"/>
    <property type="molecule type" value="mRNA"/>
</dbReference>
<dbReference type="RefSeq" id="NP_001106444.1">
    <property type="nucleotide sequence ID" value="NM_001112973.1"/>
</dbReference>
<dbReference type="RefSeq" id="XP_012825451.1">
    <property type="nucleotide sequence ID" value="XM_012969997.3"/>
</dbReference>
<dbReference type="SMR" id="A8E5V7"/>
<dbReference type="FunCoup" id="A8E5V7">
    <property type="interactions" value="1034"/>
</dbReference>
<dbReference type="STRING" id="8364.ENSXETP00000007727"/>
<dbReference type="PaxDb" id="8364-ENSXETP00000063481"/>
<dbReference type="DNASU" id="100127619"/>
<dbReference type="GeneID" id="100127619"/>
<dbReference type="KEGG" id="xtr:100127619"/>
<dbReference type="AGR" id="Xenbase:XB-GENE-941561"/>
<dbReference type="CTD" id="79903"/>
<dbReference type="Xenbase" id="XB-GENE-941561">
    <property type="gene designation" value="naa60"/>
</dbReference>
<dbReference type="eggNOG" id="KOG3138">
    <property type="taxonomic scope" value="Eukaryota"/>
</dbReference>
<dbReference type="HOGENOM" id="CLU_013985_5_4_1"/>
<dbReference type="InParanoid" id="A8E5V7"/>
<dbReference type="OMA" id="IHFYKKM"/>
<dbReference type="OrthoDB" id="47017at2759"/>
<dbReference type="PhylomeDB" id="A8E5V7"/>
<dbReference type="TreeFam" id="TF323980"/>
<dbReference type="Proteomes" id="UP000008143">
    <property type="component" value="Chromosome 9"/>
</dbReference>
<dbReference type="Bgee" id="ENSXETG00000031356">
    <property type="expression patterns" value="Expressed in 4-cell stage embryo and 12 other cell types or tissues"/>
</dbReference>
<dbReference type="GO" id="GO:0000139">
    <property type="term" value="C:Golgi membrane"/>
    <property type="evidence" value="ECO:0000250"/>
    <property type="project" value="UniProtKB"/>
</dbReference>
<dbReference type="GO" id="GO:0010485">
    <property type="term" value="F:histone H4 acetyltransferase activity"/>
    <property type="evidence" value="ECO:0000250"/>
    <property type="project" value="UniProtKB"/>
</dbReference>
<dbReference type="GO" id="GO:0042803">
    <property type="term" value="F:protein homodimerization activity"/>
    <property type="evidence" value="ECO:0000250"/>
    <property type="project" value="UniProtKB"/>
</dbReference>
<dbReference type="GO" id="GO:0120518">
    <property type="term" value="F:protein N-terminal-methionine acetyltransferase activity"/>
    <property type="evidence" value="ECO:0007669"/>
    <property type="project" value="UniProtKB-EC"/>
</dbReference>
<dbReference type="GO" id="GO:0004596">
    <property type="term" value="F:protein-N-terminal amino-acid acetyltransferase activity"/>
    <property type="evidence" value="ECO:0000250"/>
    <property type="project" value="UniProtKB"/>
</dbReference>
<dbReference type="GO" id="GO:0008283">
    <property type="term" value="P:cell population proliferation"/>
    <property type="evidence" value="ECO:0000250"/>
    <property type="project" value="UniProtKB"/>
</dbReference>
<dbReference type="GO" id="GO:0007059">
    <property type="term" value="P:chromosome segregation"/>
    <property type="evidence" value="ECO:0000250"/>
    <property type="project" value="UniProtKB"/>
</dbReference>
<dbReference type="GO" id="GO:0017196">
    <property type="term" value="P:N-terminal peptidyl-methionine acetylation"/>
    <property type="evidence" value="ECO:0000250"/>
    <property type="project" value="UniProtKB"/>
</dbReference>
<dbReference type="GO" id="GO:0006474">
    <property type="term" value="P:N-terminal protein amino acid acetylation"/>
    <property type="evidence" value="ECO:0000250"/>
    <property type="project" value="UniProtKB"/>
</dbReference>
<dbReference type="GO" id="GO:0006334">
    <property type="term" value="P:nucleosome assembly"/>
    <property type="evidence" value="ECO:0000250"/>
    <property type="project" value="UniProtKB"/>
</dbReference>
<dbReference type="CDD" id="cd04301">
    <property type="entry name" value="NAT_SF"/>
    <property type="match status" value="1"/>
</dbReference>
<dbReference type="FunFam" id="3.40.630.30:FF:000028">
    <property type="entry name" value="N-alpha-acetyltransferase 60 isoform X1"/>
    <property type="match status" value="1"/>
</dbReference>
<dbReference type="Gene3D" id="3.40.630.30">
    <property type="match status" value="1"/>
</dbReference>
<dbReference type="InterPro" id="IPR016181">
    <property type="entry name" value="Acyl_CoA_acyltransferase"/>
</dbReference>
<dbReference type="InterPro" id="IPR000182">
    <property type="entry name" value="GNAT_dom"/>
</dbReference>
<dbReference type="InterPro" id="IPR045141">
    <property type="entry name" value="NAA60-like"/>
</dbReference>
<dbReference type="PANTHER" id="PTHR14744">
    <property type="entry name" value="N-ALPHA-ACETYLTRANSFERASE 60"/>
    <property type="match status" value="1"/>
</dbReference>
<dbReference type="PANTHER" id="PTHR14744:SF15">
    <property type="entry name" value="N-ALPHA-ACETYLTRANSFERASE 60"/>
    <property type="match status" value="1"/>
</dbReference>
<dbReference type="Pfam" id="PF00583">
    <property type="entry name" value="Acetyltransf_1"/>
    <property type="match status" value="1"/>
</dbReference>
<dbReference type="SUPFAM" id="SSF55729">
    <property type="entry name" value="Acyl-CoA N-acyltransferases (Nat)"/>
    <property type="match status" value="1"/>
</dbReference>
<dbReference type="PROSITE" id="PS51186">
    <property type="entry name" value="GNAT"/>
    <property type="match status" value="1"/>
</dbReference>
<name>NAA60_XENTR</name>
<accession>A8E5V7</accession>
<organism>
    <name type="scientific">Xenopus tropicalis</name>
    <name type="common">Western clawed frog</name>
    <name type="synonym">Silurana tropicalis</name>
    <dbReference type="NCBI Taxonomy" id="8364"/>
    <lineage>
        <taxon>Eukaryota</taxon>
        <taxon>Metazoa</taxon>
        <taxon>Chordata</taxon>
        <taxon>Craniata</taxon>
        <taxon>Vertebrata</taxon>
        <taxon>Euteleostomi</taxon>
        <taxon>Amphibia</taxon>
        <taxon>Batrachia</taxon>
        <taxon>Anura</taxon>
        <taxon>Pipoidea</taxon>
        <taxon>Pipidae</taxon>
        <taxon>Xenopodinae</taxon>
        <taxon>Xenopus</taxon>
        <taxon>Silurana</taxon>
    </lineage>
</organism>
<gene>
    <name type="primary">naa60</name>
    <name type="synonym">nat15</name>
</gene>
<keyword id="KW-0012">Acyltransferase</keyword>
<keyword id="KW-0156">Chromatin regulator</keyword>
<keyword id="KW-0159">Chromosome partition</keyword>
<keyword id="KW-0333">Golgi apparatus</keyword>
<keyword id="KW-0472">Membrane</keyword>
<keyword id="KW-1185">Reference proteome</keyword>
<keyword id="KW-0808">Transferase</keyword>
<feature type="chain" id="PRO_0000321570" description="N-alpha-acetyltransferase 60">
    <location>
        <begin position="1"/>
        <end position="242"/>
    </location>
</feature>
<feature type="topological domain" description="Cytoplasmic" evidence="1">
    <location>
        <begin position="1"/>
        <end position="192"/>
    </location>
</feature>
<feature type="intramembrane region" description="Helical" evidence="1">
    <location>
        <begin position="193"/>
        <end position="236"/>
    </location>
</feature>
<feature type="topological domain" description="Cytoplasmic" evidence="1">
    <location>
        <begin position="237"/>
        <end position="242"/>
    </location>
</feature>
<feature type="domain" description="N-acetyltransferase" evidence="2">
    <location>
        <begin position="13"/>
        <end position="182"/>
    </location>
</feature>
<feature type="region of interest" description="Required for homodimerization" evidence="1">
    <location>
        <begin position="162"/>
        <end position="173"/>
    </location>
</feature>
<feature type="active site" evidence="1">
    <location>
        <position position="97"/>
    </location>
</feature>
<feature type="active site" evidence="1">
    <location>
        <position position="138"/>
    </location>
</feature>
<feature type="binding site" evidence="1">
    <location>
        <position position="38"/>
    </location>
    <ligand>
        <name>substrate</name>
    </ligand>
</feature>
<feature type="binding site" evidence="1">
    <location>
        <position position="99"/>
    </location>
    <ligand>
        <name>substrate</name>
    </ligand>
</feature>
<feature type="binding site" evidence="1">
    <location>
        <begin position="101"/>
        <end position="103"/>
    </location>
    <ligand>
        <name>acetyl-CoA</name>
        <dbReference type="ChEBI" id="CHEBI:57288"/>
    </ligand>
</feature>
<feature type="binding site" evidence="1">
    <location>
        <begin position="109"/>
        <end position="114"/>
    </location>
    <ligand>
        <name>acetyl-CoA</name>
        <dbReference type="ChEBI" id="CHEBI:57288"/>
    </ligand>
</feature>
<feature type="binding site" evidence="1">
    <location>
        <position position="143"/>
    </location>
    <ligand>
        <name>acetyl-CoA</name>
        <dbReference type="ChEBI" id="CHEBI:57288"/>
    </ligand>
</feature>
<feature type="binding site" evidence="1">
    <location>
        <begin position="150"/>
        <end position="153"/>
    </location>
    <ligand>
        <name>acetyl-CoA</name>
        <dbReference type="ChEBI" id="CHEBI:57288"/>
    </ligand>
</feature>
<feature type="binding site" evidence="1">
    <location>
        <position position="165"/>
    </location>
    <ligand>
        <name>substrate</name>
    </ligand>
</feature>
<sequence length="242" mass="27575">MSEEERPAALADTILRFLCHDDIDTVKELCADWFPIEYPDSWYRDITSNKKFFSLAATYNGQIVGMIVAEIKGRTKVHKEDGDILASSFSGDTQVAYILSLGVVKEFRKQGIGSLLLESLKSHISSTAQDHCKALYLHVLTTNSNAIRFYENRHFHQHHYLPYYYSIRGVLQDAYTYVLYLNGGHPPWTVMDYLQHLGSALAGFSPCTLPQRIYRQAHTLLRSLLPWSSISAKSGIEYSRTM</sequence>
<proteinExistence type="evidence at transcript level"/>
<protein>
    <recommendedName>
        <fullName>N-alpha-acetyltransferase 60</fullName>
        <ecNumber evidence="1">2.3.1.259</ecNumber>
    </recommendedName>
    <alternativeName>
        <fullName evidence="1">Histone acetyltransferase type B protein 4</fullName>
        <shortName evidence="1">HAT4</shortName>
        <ecNumber evidence="1">2.3.1.48</ecNumber>
    </alternativeName>
    <alternativeName>
        <fullName>N-acetyltransferase 15</fullName>
    </alternativeName>
    <alternativeName>
        <fullName>N-alpha-acetyltransferase F</fullName>
        <shortName>NatF</shortName>
    </alternativeName>
</protein>
<comment type="function">
    <text evidence="1">N-alpha-acetyltransferase that specifically mediates the acetylation of N-terminal residues of the transmembrane proteins, with a strong preference for N-termini facing the cytosol. Displays N-terminal acetyltransferase activity towards a range of N-terminal sequences including those starting with Met-Lys, Met-Val, Met-Ala and Met-Met. Required for normal chromosomal segregation during anaphase. May also show histone acetyltransferase activity; such results are however unclear in vivo and would require additional experimental evidences.</text>
</comment>
<comment type="catalytic activity">
    <reaction evidence="1">
        <text>N-terminal L-methionyl-[transmembrane protein] + acetyl-CoA = N-terminal N(alpha)-acetyl-L-methionyl-[transmembrane protein] + CoA + H(+)</text>
        <dbReference type="Rhea" id="RHEA:50604"/>
        <dbReference type="Rhea" id="RHEA-COMP:12745"/>
        <dbReference type="Rhea" id="RHEA-COMP:12746"/>
        <dbReference type="ChEBI" id="CHEBI:15378"/>
        <dbReference type="ChEBI" id="CHEBI:57287"/>
        <dbReference type="ChEBI" id="CHEBI:57288"/>
        <dbReference type="ChEBI" id="CHEBI:64731"/>
        <dbReference type="ChEBI" id="CHEBI:133414"/>
        <dbReference type="EC" id="2.3.1.259"/>
    </reaction>
</comment>
<comment type="catalytic activity">
    <reaction evidence="1">
        <text>L-lysyl-[protein] + acetyl-CoA = N(6)-acetyl-L-lysyl-[protein] + CoA + H(+)</text>
        <dbReference type="Rhea" id="RHEA:45948"/>
        <dbReference type="Rhea" id="RHEA-COMP:9752"/>
        <dbReference type="Rhea" id="RHEA-COMP:10731"/>
        <dbReference type="ChEBI" id="CHEBI:15378"/>
        <dbReference type="ChEBI" id="CHEBI:29969"/>
        <dbReference type="ChEBI" id="CHEBI:57287"/>
        <dbReference type="ChEBI" id="CHEBI:57288"/>
        <dbReference type="ChEBI" id="CHEBI:61930"/>
        <dbReference type="EC" id="2.3.1.48"/>
    </reaction>
</comment>
<comment type="subunit">
    <text evidence="1">Monomer and homodimer; monomer in presence of substrate and homodimer in its absence.</text>
</comment>
<comment type="subcellular location">
    <subcellularLocation>
        <location evidence="1">Golgi apparatus membrane</location>
        <topology evidence="1">Peripheral membrane protein</topology>
        <orientation evidence="1">Cytoplasmic side</orientation>
    </subcellularLocation>
    <text evidence="1">Probably forms a intramembrane hairpin-like structure in the membrane.</text>
</comment>
<comment type="similarity">
    <text evidence="3">Belongs to the acetyltransferase family. NAA60 subfamily.</text>
</comment>